<comment type="function">
    <text evidence="2">Aminopeptidase that preferentially cleaves di- and tripeptides. Also has low epoxide hydrolase activity (in vitro). Can hydrolyze the epoxide leukotriene LTA(4) but it forms preferentially 5,6-dihydroxy-7,9,11,14-eicosatetraenoic acid rather than the cytokine leukotriene B(4) as the product compared to the homologous mammalian enzyme (in vitro).</text>
</comment>
<comment type="catalytic activity">
    <reaction evidence="2">
        <text>an epoxide + H2O = an ethanediol</text>
        <dbReference type="Rhea" id="RHEA:19037"/>
        <dbReference type="ChEBI" id="CHEBI:15377"/>
        <dbReference type="ChEBI" id="CHEBI:32955"/>
        <dbReference type="ChEBI" id="CHEBI:140594"/>
        <dbReference type="EC" id="3.3.2.10"/>
    </reaction>
</comment>
<comment type="cofactor">
    <cofactor evidence="2">
        <name>Zn(2+)</name>
        <dbReference type="ChEBI" id="CHEBI:29105"/>
    </cofactor>
    <text evidence="2">Binds 1 zinc ion per subunit.</text>
</comment>
<comment type="subcellular location">
    <subcellularLocation>
        <location evidence="2">Cytoplasm</location>
    </subcellularLocation>
    <subcellularLocation>
        <location evidence="2">Nucleus</location>
    </subcellularLocation>
</comment>
<comment type="similarity">
    <text evidence="4">Belongs to the peptidase M1 family.</text>
</comment>
<dbReference type="EC" id="3.4.11.-"/>
<dbReference type="EC" id="3.3.2.10"/>
<dbReference type="EMBL" id="DS027060">
    <property type="protein sequence ID" value="EAW06269.1"/>
    <property type="molecule type" value="Genomic_DNA"/>
</dbReference>
<dbReference type="RefSeq" id="XP_001267695.1">
    <property type="nucleotide sequence ID" value="XM_001267694.1"/>
</dbReference>
<dbReference type="SMR" id="A1CSI2"/>
<dbReference type="STRING" id="344612.A1CSI2"/>
<dbReference type="MEROPS" id="M01.034"/>
<dbReference type="EnsemblFungi" id="EAW06269">
    <property type="protein sequence ID" value="EAW06269"/>
    <property type="gene ID" value="ACLA_079530"/>
</dbReference>
<dbReference type="GeneID" id="4700012"/>
<dbReference type="KEGG" id="act:ACLA_079530"/>
<dbReference type="VEuPathDB" id="FungiDB:ACLA_079530"/>
<dbReference type="eggNOG" id="KOG1047">
    <property type="taxonomic scope" value="Eukaryota"/>
</dbReference>
<dbReference type="HOGENOM" id="CLU_014505_1_1_1"/>
<dbReference type="OMA" id="CTALQWM"/>
<dbReference type="OrthoDB" id="79562at2759"/>
<dbReference type="Proteomes" id="UP000006701">
    <property type="component" value="Unassembled WGS sequence"/>
</dbReference>
<dbReference type="GO" id="GO:0005829">
    <property type="term" value="C:cytosol"/>
    <property type="evidence" value="ECO:0007669"/>
    <property type="project" value="TreeGrafter"/>
</dbReference>
<dbReference type="GO" id="GO:0000328">
    <property type="term" value="C:fungal-type vacuole lumen"/>
    <property type="evidence" value="ECO:0007669"/>
    <property type="project" value="EnsemblFungi"/>
</dbReference>
<dbReference type="GO" id="GO:0005771">
    <property type="term" value="C:multivesicular body"/>
    <property type="evidence" value="ECO:0007669"/>
    <property type="project" value="EnsemblFungi"/>
</dbReference>
<dbReference type="GO" id="GO:0005634">
    <property type="term" value="C:nucleus"/>
    <property type="evidence" value="ECO:0007669"/>
    <property type="project" value="UniProtKB-SubCell"/>
</dbReference>
<dbReference type="GO" id="GO:0061957">
    <property type="term" value="C:NVT complex"/>
    <property type="evidence" value="ECO:0007669"/>
    <property type="project" value="EnsemblFungi"/>
</dbReference>
<dbReference type="GO" id="GO:0004177">
    <property type="term" value="F:aminopeptidase activity"/>
    <property type="evidence" value="ECO:0000250"/>
    <property type="project" value="UniProtKB"/>
</dbReference>
<dbReference type="GO" id="GO:0004301">
    <property type="term" value="F:epoxide hydrolase activity"/>
    <property type="evidence" value="ECO:0000250"/>
    <property type="project" value="UniProtKB"/>
</dbReference>
<dbReference type="GO" id="GO:0008237">
    <property type="term" value="F:metallopeptidase activity"/>
    <property type="evidence" value="ECO:0007669"/>
    <property type="project" value="UniProtKB-KW"/>
</dbReference>
<dbReference type="GO" id="GO:0008270">
    <property type="term" value="F:zinc ion binding"/>
    <property type="evidence" value="ECO:0000250"/>
    <property type="project" value="UniProtKB"/>
</dbReference>
<dbReference type="GO" id="GO:0120113">
    <property type="term" value="P:cytoplasm to vacuole targeting by the NVT pathway"/>
    <property type="evidence" value="ECO:0007669"/>
    <property type="project" value="EnsemblFungi"/>
</dbReference>
<dbReference type="GO" id="GO:0006629">
    <property type="term" value="P:lipid metabolic process"/>
    <property type="evidence" value="ECO:0007669"/>
    <property type="project" value="EnsemblFungi"/>
</dbReference>
<dbReference type="GO" id="GO:0043171">
    <property type="term" value="P:peptide catabolic process"/>
    <property type="evidence" value="ECO:0000250"/>
    <property type="project" value="UniProtKB"/>
</dbReference>
<dbReference type="GO" id="GO:0030163">
    <property type="term" value="P:protein catabolic process"/>
    <property type="evidence" value="ECO:0007669"/>
    <property type="project" value="EnsemblFungi"/>
</dbReference>
<dbReference type="GO" id="GO:0006508">
    <property type="term" value="P:proteolysis"/>
    <property type="evidence" value="ECO:0007669"/>
    <property type="project" value="UniProtKB-KW"/>
</dbReference>
<dbReference type="CDD" id="cd09599">
    <property type="entry name" value="M1_LTA4H"/>
    <property type="match status" value="1"/>
</dbReference>
<dbReference type="FunFam" id="1.10.390.10:FF:000009">
    <property type="entry name" value="Leukotriene A(4) hydrolase"/>
    <property type="match status" value="1"/>
</dbReference>
<dbReference type="FunFam" id="1.25.40.320:FF:000001">
    <property type="entry name" value="Leukotriene A(4) hydrolase"/>
    <property type="match status" value="1"/>
</dbReference>
<dbReference type="FunFam" id="2.60.40.1730:FF:000004">
    <property type="entry name" value="Leukotriene A(4) hydrolase"/>
    <property type="match status" value="1"/>
</dbReference>
<dbReference type="FunFam" id="3.30.2010.30:FF:000001">
    <property type="entry name" value="Leukotriene A(4) hydrolase"/>
    <property type="match status" value="1"/>
</dbReference>
<dbReference type="Gene3D" id="3.30.2010.30">
    <property type="match status" value="1"/>
</dbReference>
<dbReference type="Gene3D" id="1.10.390.10">
    <property type="entry name" value="Neutral Protease Domain 2"/>
    <property type="match status" value="1"/>
</dbReference>
<dbReference type="Gene3D" id="1.25.40.320">
    <property type="entry name" value="Peptidase M1, leukotriene A4 hydrolase/aminopeptidase C-terminal domain"/>
    <property type="match status" value="1"/>
</dbReference>
<dbReference type="Gene3D" id="2.60.40.1730">
    <property type="entry name" value="tricorn interacting facor f3 domain"/>
    <property type="match status" value="1"/>
</dbReference>
<dbReference type="InterPro" id="IPR045357">
    <property type="entry name" value="Aminopeptidase_N-like_N"/>
</dbReference>
<dbReference type="InterPro" id="IPR042097">
    <property type="entry name" value="Aminopeptidase_N-like_N_sf"/>
</dbReference>
<dbReference type="InterPro" id="IPR016024">
    <property type="entry name" value="ARM-type_fold"/>
</dbReference>
<dbReference type="InterPro" id="IPR012777">
    <property type="entry name" value="LTA4H"/>
</dbReference>
<dbReference type="InterPro" id="IPR049980">
    <property type="entry name" value="LTA4H_cat"/>
</dbReference>
<dbReference type="InterPro" id="IPR038502">
    <property type="entry name" value="M1_LTA-4_hydro/amino_C_sf"/>
</dbReference>
<dbReference type="InterPro" id="IPR034015">
    <property type="entry name" value="M1_LTA4H"/>
</dbReference>
<dbReference type="InterPro" id="IPR001930">
    <property type="entry name" value="Peptidase_M1"/>
</dbReference>
<dbReference type="InterPro" id="IPR015211">
    <property type="entry name" value="Peptidase_M1_C"/>
</dbReference>
<dbReference type="InterPro" id="IPR014782">
    <property type="entry name" value="Peptidase_M1_dom"/>
</dbReference>
<dbReference type="InterPro" id="IPR027268">
    <property type="entry name" value="Peptidase_M4/M1_CTD_sf"/>
</dbReference>
<dbReference type="NCBIfam" id="TIGR02411">
    <property type="entry name" value="leuko_A4_hydro"/>
    <property type="match status" value="1"/>
</dbReference>
<dbReference type="PANTHER" id="PTHR45726">
    <property type="entry name" value="LEUKOTRIENE A-4 HYDROLASE"/>
    <property type="match status" value="1"/>
</dbReference>
<dbReference type="PANTHER" id="PTHR45726:SF3">
    <property type="entry name" value="LEUKOTRIENE A-4 HYDROLASE"/>
    <property type="match status" value="1"/>
</dbReference>
<dbReference type="Pfam" id="PF09127">
    <property type="entry name" value="Leuk-A4-hydro_C"/>
    <property type="match status" value="1"/>
</dbReference>
<dbReference type="Pfam" id="PF01433">
    <property type="entry name" value="Peptidase_M1"/>
    <property type="match status" value="1"/>
</dbReference>
<dbReference type="Pfam" id="PF17900">
    <property type="entry name" value="Peptidase_M1_N"/>
    <property type="match status" value="1"/>
</dbReference>
<dbReference type="PRINTS" id="PR00756">
    <property type="entry name" value="ALADIPTASE"/>
</dbReference>
<dbReference type="SMART" id="SM01263">
    <property type="entry name" value="Leuk-A4-hydro_C"/>
    <property type="match status" value="1"/>
</dbReference>
<dbReference type="SUPFAM" id="SSF48371">
    <property type="entry name" value="ARM repeat"/>
    <property type="match status" value="1"/>
</dbReference>
<dbReference type="SUPFAM" id="SSF63737">
    <property type="entry name" value="Leukotriene A4 hydrolase N-terminal domain"/>
    <property type="match status" value="1"/>
</dbReference>
<dbReference type="SUPFAM" id="SSF55486">
    <property type="entry name" value="Metalloproteases ('zincins'), catalytic domain"/>
    <property type="match status" value="1"/>
</dbReference>
<dbReference type="PROSITE" id="PS00142">
    <property type="entry name" value="ZINC_PROTEASE"/>
    <property type="match status" value="1"/>
</dbReference>
<protein>
    <recommendedName>
        <fullName>Leucine aminopeptidase 2</fullName>
        <ecNumber>3.4.11.-</ecNumber>
    </recommendedName>
    <alternativeName>
        <fullName>Epoxide hydrolase</fullName>
        <ecNumber>3.3.2.10</ecNumber>
    </alternativeName>
    <alternativeName>
        <fullName>Leukotriene A-4 hydrolase homolog</fullName>
        <shortName>LTA-4 hydrolase</shortName>
    </alternativeName>
</protein>
<keyword id="KW-0963">Cytoplasm</keyword>
<keyword id="KW-0378">Hydrolase</keyword>
<keyword id="KW-0479">Metal-binding</keyword>
<keyword id="KW-0482">Metalloprotease</keyword>
<keyword id="KW-0539">Nucleus</keyword>
<keyword id="KW-0645">Protease</keyword>
<keyword id="KW-1185">Reference proteome</keyword>
<keyword id="KW-0862">Zinc</keyword>
<accession>A1CSI2</accession>
<proteinExistence type="inferred from homology"/>
<sequence length="618" mass="70370">MATVINPPRDPNTLSNYNNWVSIHITANFDILFDQKKLAGNVVHRFRSTTRGESRDIILDTNHLDIGGVKVNGQPSSWEFLPRLEPYGTPLKIKLDQAVELDETIEVDISVTTTEKCTALQWLTPAQTSNKKHPYMFSQCQAIHARSIFPCQDTPDVKCTLDFNITSPLPVIASGLPVRKQPETSKSEGKSLYQFHQKVPIPSYLFALASGDISEASIGPRSVVATSPDKLRECQWELEADTEKFINAIEKIVYPYVWGEYNVLILPPSFPYGGMENPIFTFATPSIISKDRENIDVIAHELAHSWSGNLVTNASWEHFWLNEGWTTYLERRVSDASVHGEPYRHFSAIIGWKALTDSMDHFGHDHDFTKLITNLKGKDPDDAFSSIPYEKGFNFLYYLETLVGKSKFDDFIPHYFNKFKGKSLDSYEFKATILDFFQADSEAAKALNEVDWDKWFYAPGLPPKPDFDTSLVDVVYDLAKKWLSLPGSSFKPQPNDIRGLSANQIVVFLEQVLVSEHQLTPELSRLMGEVYGLARSNNIEVANLYCQVGMKAGDESVLEPTIELLGKIGRMKFVRPLYRNLQKFNRQRAIETFQEYKDFYHPICRAMVEKDLFGKKEE</sequence>
<evidence type="ECO:0000250" key="1">
    <source>
        <dbReference type="UniProtKB" id="P09960"/>
    </source>
</evidence>
<evidence type="ECO:0000250" key="2">
    <source>
        <dbReference type="UniProtKB" id="Q10740"/>
    </source>
</evidence>
<evidence type="ECO:0000255" key="3">
    <source>
        <dbReference type="PROSITE-ProRule" id="PRU10095"/>
    </source>
</evidence>
<evidence type="ECO:0000305" key="4"/>
<gene>
    <name type="ORF">ACLA_079530</name>
</gene>
<feature type="chain" id="PRO_0000324918" description="Leucine aminopeptidase 2">
    <location>
        <begin position="1"/>
        <end position="618"/>
    </location>
</feature>
<feature type="active site" description="Proton acceptor" evidence="3">
    <location>
        <position position="301"/>
    </location>
</feature>
<feature type="active site" description="Proton donor" evidence="3">
    <location>
        <position position="389"/>
    </location>
</feature>
<feature type="binding site" evidence="1">
    <location>
        <begin position="139"/>
        <end position="141"/>
    </location>
    <ligand>
        <name>a peptide</name>
        <dbReference type="ChEBI" id="CHEBI:60466"/>
    </ligand>
</feature>
<feature type="binding site" evidence="1">
    <location>
        <begin position="271"/>
        <end position="276"/>
    </location>
    <ligand>
        <name>a peptide</name>
        <dbReference type="ChEBI" id="CHEBI:60466"/>
    </ligand>
</feature>
<feature type="binding site" evidence="3">
    <location>
        <position position="300"/>
    </location>
    <ligand>
        <name>Zn(2+)</name>
        <dbReference type="ChEBI" id="CHEBI:29105"/>
        <note>catalytic</note>
    </ligand>
</feature>
<feature type="binding site" evidence="3">
    <location>
        <position position="304"/>
    </location>
    <ligand>
        <name>Zn(2+)</name>
        <dbReference type="ChEBI" id="CHEBI:29105"/>
        <note>catalytic</note>
    </ligand>
</feature>
<feature type="binding site" evidence="3">
    <location>
        <position position="323"/>
    </location>
    <ligand>
        <name>Zn(2+)</name>
        <dbReference type="ChEBI" id="CHEBI:29105"/>
        <note>catalytic</note>
    </ligand>
</feature>
<organism>
    <name type="scientific">Aspergillus clavatus (strain ATCC 1007 / CBS 513.65 / DSM 816 / NCTC 3887 / NRRL 1 / QM 1276 / 107)</name>
    <dbReference type="NCBI Taxonomy" id="344612"/>
    <lineage>
        <taxon>Eukaryota</taxon>
        <taxon>Fungi</taxon>
        <taxon>Dikarya</taxon>
        <taxon>Ascomycota</taxon>
        <taxon>Pezizomycotina</taxon>
        <taxon>Eurotiomycetes</taxon>
        <taxon>Eurotiomycetidae</taxon>
        <taxon>Eurotiales</taxon>
        <taxon>Aspergillaceae</taxon>
        <taxon>Aspergillus</taxon>
        <taxon>Aspergillus subgen. Fumigati</taxon>
    </lineage>
</organism>
<name>LKHA4_ASPCL</name>
<reference key="1">
    <citation type="journal article" date="2008" name="PLoS Genet.">
        <title>Genomic islands in the pathogenic filamentous fungus Aspergillus fumigatus.</title>
        <authorList>
            <person name="Fedorova N.D."/>
            <person name="Khaldi N."/>
            <person name="Joardar V.S."/>
            <person name="Maiti R."/>
            <person name="Amedeo P."/>
            <person name="Anderson M.J."/>
            <person name="Crabtree J."/>
            <person name="Silva J.C."/>
            <person name="Badger J.H."/>
            <person name="Albarraq A."/>
            <person name="Angiuoli S."/>
            <person name="Bussey H."/>
            <person name="Bowyer P."/>
            <person name="Cotty P.J."/>
            <person name="Dyer P.S."/>
            <person name="Egan A."/>
            <person name="Galens K."/>
            <person name="Fraser-Liggett C.M."/>
            <person name="Haas B.J."/>
            <person name="Inman J.M."/>
            <person name="Kent R."/>
            <person name="Lemieux S."/>
            <person name="Malavazi I."/>
            <person name="Orvis J."/>
            <person name="Roemer T."/>
            <person name="Ronning C.M."/>
            <person name="Sundaram J.P."/>
            <person name="Sutton G."/>
            <person name="Turner G."/>
            <person name="Venter J.C."/>
            <person name="White O.R."/>
            <person name="Whitty B.R."/>
            <person name="Youngman P."/>
            <person name="Wolfe K.H."/>
            <person name="Goldman G.H."/>
            <person name="Wortman J.R."/>
            <person name="Jiang B."/>
            <person name="Denning D.W."/>
            <person name="Nierman W.C."/>
        </authorList>
    </citation>
    <scope>NUCLEOTIDE SEQUENCE [LARGE SCALE GENOMIC DNA]</scope>
    <source>
        <strain>ATCC 1007 / CBS 513.65 / DSM 816 / NCTC 3887 / NRRL 1 / QM 1276 / 107</strain>
    </source>
</reference>